<accession>A1U3J9</accession>
<comment type="function">
    <text evidence="1">Catalyzes the interconversion of methylthioribose-1-phosphate (MTR-1-P) into methylthioribulose-1-phosphate (MTRu-1-P).</text>
</comment>
<comment type="catalytic activity">
    <reaction evidence="1">
        <text>5-(methylsulfanyl)-alpha-D-ribose 1-phosphate = 5-(methylsulfanyl)-D-ribulose 1-phosphate</text>
        <dbReference type="Rhea" id="RHEA:19989"/>
        <dbReference type="ChEBI" id="CHEBI:58533"/>
        <dbReference type="ChEBI" id="CHEBI:58548"/>
        <dbReference type="EC" id="5.3.1.23"/>
    </reaction>
</comment>
<comment type="pathway">
    <text evidence="1">Amino-acid biosynthesis; L-methionine biosynthesis via salvage pathway; L-methionine from S-methyl-5-thio-alpha-D-ribose 1-phosphate: step 1/6.</text>
</comment>
<comment type="similarity">
    <text evidence="2">Belongs to the eIF-2B alpha/beta/delta subunits family. MtnA subfamily.</text>
</comment>
<reference key="1">
    <citation type="journal article" date="2011" name="Appl. Environ. Microbiol.">
        <title>Genomic potential of Marinobacter aquaeolei, a biogeochemical 'opportunitroph'.</title>
        <authorList>
            <person name="Singer E."/>
            <person name="Webb E.A."/>
            <person name="Nelson W.C."/>
            <person name="Heidelberg J.F."/>
            <person name="Ivanova N."/>
            <person name="Pati A."/>
            <person name="Edwards K.J."/>
        </authorList>
    </citation>
    <scope>NUCLEOTIDE SEQUENCE [LARGE SCALE GENOMIC DNA]</scope>
    <source>
        <strain>ATCC 700491 / DSM 11845 / VT8</strain>
    </source>
</reference>
<name>MTNA_MARN8</name>
<proteinExistence type="inferred from homology"/>
<organism>
    <name type="scientific">Marinobacter nauticus (strain ATCC 700491 / DSM 11845 / VT8)</name>
    <name type="common">Marinobacter aquaeolei</name>
    <dbReference type="NCBI Taxonomy" id="351348"/>
    <lineage>
        <taxon>Bacteria</taxon>
        <taxon>Pseudomonadati</taxon>
        <taxon>Pseudomonadota</taxon>
        <taxon>Gammaproteobacteria</taxon>
        <taxon>Pseudomonadales</taxon>
        <taxon>Marinobacteraceae</taxon>
        <taxon>Marinobacter</taxon>
    </lineage>
</organism>
<dbReference type="EC" id="5.3.1.23" evidence="1"/>
<dbReference type="EMBL" id="CP000514">
    <property type="protein sequence ID" value="ABM19568.1"/>
    <property type="molecule type" value="Genomic_DNA"/>
</dbReference>
<dbReference type="SMR" id="A1U3J9"/>
<dbReference type="STRING" id="351348.Maqu_2493"/>
<dbReference type="KEGG" id="maq:Maqu_2493"/>
<dbReference type="eggNOG" id="COG0182">
    <property type="taxonomic scope" value="Bacteria"/>
</dbReference>
<dbReference type="HOGENOM" id="CLU_016218_1_2_6"/>
<dbReference type="OrthoDB" id="9803436at2"/>
<dbReference type="UniPathway" id="UPA00904">
    <property type="reaction ID" value="UER00874"/>
</dbReference>
<dbReference type="Proteomes" id="UP000000998">
    <property type="component" value="Chromosome"/>
</dbReference>
<dbReference type="GO" id="GO:0046523">
    <property type="term" value="F:S-methyl-5-thioribose-1-phosphate isomerase activity"/>
    <property type="evidence" value="ECO:0007669"/>
    <property type="project" value="UniProtKB-UniRule"/>
</dbReference>
<dbReference type="GO" id="GO:0019509">
    <property type="term" value="P:L-methionine salvage from methylthioadenosine"/>
    <property type="evidence" value="ECO:0007669"/>
    <property type="project" value="UniProtKB-UniRule"/>
</dbReference>
<dbReference type="FunFam" id="1.20.120.420:FF:000003">
    <property type="entry name" value="Methylthioribose-1-phosphate isomerase"/>
    <property type="match status" value="1"/>
</dbReference>
<dbReference type="FunFam" id="3.40.50.10470:FF:000006">
    <property type="entry name" value="Methylthioribose-1-phosphate isomerase"/>
    <property type="match status" value="1"/>
</dbReference>
<dbReference type="Gene3D" id="1.20.120.420">
    <property type="entry name" value="translation initiation factor eif-2b, domain 1"/>
    <property type="match status" value="1"/>
</dbReference>
<dbReference type="Gene3D" id="3.40.50.10470">
    <property type="entry name" value="Translation initiation factor eif-2b, domain 2"/>
    <property type="match status" value="1"/>
</dbReference>
<dbReference type="HAMAP" id="MF_01678">
    <property type="entry name" value="Salvage_MtnA"/>
    <property type="match status" value="1"/>
</dbReference>
<dbReference type="InterPro" id="IPR000649">
    <property type="entry name" value="IF-2B-related"/>
</dbReference>
<dbReference type="InterPro" id="IPR005251">
    <property type="entry name" value="IF-M1Pi"/>
</dbReference>
<dbReference type="InterPro" id="IPR042529">
    <property type="entry name" value="IF_2B-like_C"/>
</dbReference>
<dbReference type="InterPro" id="IPR011559">
    <property type="entry name" value="Initiation_fac_2B_a/b/d"/>
</dbReference>
<dbReference type="InterPro" id="IPR027363">
    <property type="entry name" value="M1Pi_N"/>
</dbReference>
<dbReference type="InterPro" id="IPR037171">
    <property type="entry name" value="NagB/RpiA_transferase-like"/>
</dbReference>
<dbReference type="NCBIfam" id="TIGR00524">
    <property type="entry name" value="eIF-2B_rel"/>
    <property type="match status" value="1"/>
</dbReference>
<dbReference type="NCBIfam" id="NF004326">
    <property type="entry name" value="PRK05720.1"/>
    <property type="match status" value="1"/>
</dbReference>
<dbReference type="NCBIfam" id="TIGR00512">
    <property type="entry name" value="salvage_mtnA"/>
    <property type="match status" value="1"/>
</dbReference>
<dbReference type="PANTHER" id="PTHR43475">
    <property type="entry name" value="METHYLTHIORIBOSE-1-PHOSPHATE ISOMERASE"/>
    <property type="match status" value="1"/>
</dbReference>
<dbReference type="PANTHER" id="PTHR43475:SF1">
    <property type="entry name" value="METHYLTHIORIBOSE-1-PHOSPHATE ISOMERASE"/>
    <property type="match status" value="1"/>
</dbReference>
<dbReference type="Pfam" id="PF01008">
    <property type="entry name" value="IF-2B"/>
    <property type="match status" value="1"/>
</dbReference>
<dbReference type="SUPFAM" id="SSF100950">
    <property type="entry name" value="NagB/RpiA/CoA transferase-like"/>
    <property type="match status" value="1"/>
</dbReference>
<sequence>MAGRSSNRSIGTVAMRWHGDRLELLDQRLLPAEEHWIVADGASAVAQCITDMVVRGAPAIGISAAYGVALAARHAGGGDWQAEIKQAIRVLAKSRPTAVNLFWALERMEKVFHACHSLDEATDRLAAEAVRLHEDDLAANLAMADYALEVMNPDKPIAVLTHCNTGALATGGYGTALGVIRRLHEEKLLKRVYADETRPWLQGSRLTAWELTRDHIPVTLNADGAAAAIMASGKVKWIVVGADRITANGDVANKIGTYNLAVLARHHKIGFMVVAPSSTVDMSLESGKDIPIEEREGTEVREIRGIPLAPAGVQVFNPVFDVTPASLIDAIVTEKGAVRNPNITGMRALFT</sequence>
<evidence type="ECO:0000255" key="1">
    <source>
        <dbReference type="HAMAP-Rule" id="MF_01678"/>
    </source>
</evidence>
<evidence type="ECO:0000305" key="2"/>
<protein>
    <recommendedName>
        <fullName evidence="1">Methylthioribose-1-phosphate isomerase</fullName>
        <shortName evidence="1">M1Pi</shortName>
        <shortName evidence="1">MTR-1-P isomerase</shortName>
        <ecNumber evidence="1">5.3.1.23</ecNumber>
    </recommendedName>
    <alternativeName>
        <fullName evidence="1">S-methyl-5-thioribose-1-phosphate isomerase</fullName>
    </alternativeName>
</protein>
<gene>
    <name evidence="1" type="primary">mtnA</name>
    <name type="ordered locus">Maqu_2493</name>
</gene>
<keyword id="KW-0028">Amino-acid biosynthesis</keyword>
<keyword id="KW-0413">Isomerase</keyword>
<keyword id="KW-0486">Methionine biosynthesis</keyword>
<feature type="chain" id="PRO_0000357203" description="Methylthioribose-1-phosphate isomerase">
    <location>
        <begin position="1"/>
        <end position="351"/>
    </location>
</feature>
<feature type="active site" description="Proton donor" evidence="1">
    <location>
        <position position="243"/>
    </location>
</feature>
<feature type="binding site" evidence="1">
    <location>
        <begin position="55"/>
        <end position="57"/>
    </location>
    <ligand>
        <name>substrate</name>
    </ligand>
</feature>
<feature type="binding site" evidence="1">
    <location>
        <position position="95"/>
    </location>
    <ligand>
        <name>substrate</name>
    </ligand>
</feature>
<feature type="binding site" evidence="1">
    <location>
        <position position="202"/>
    </location>
    <ligand>
        <name>substrate</name>
    </ligand>
</feature>
<feature type="binding site" evidence="1">
    <location>
        <begin position="253"/>
        <end position="254"/>
    </location>
    <ligand>
        <name>substrate</name>
    </ligand>
</feature>
<feature type="site" description="Transition state stabilizer" evidence="1">
    <location>
        <position position="163"/>
    </location>
</feature>